<dbReference type="EC" id="2.4.2.9" evidence="1"/>
<dbReference type="EMBL" id="AM295250">
    <property type="protein sequence ID" value="CAL27722.1"/>
    <property type="molecule type" value="Genomic_DNA"/>
</dbReference>
<dbReference type="RefSeq" id="WP_015900064.1">
    <property type="nucleotide sequence ID" value="NC_012121.1"/>
</dbReference>
<dbReference type="SMR" id="B9DPQ3"/>
<dbReference type="GeneID" id="93795747"/>
<dbReference type="KEGG" id="sca:SCA_0812"/>
<dbReference type="eggNOG" id="COG2065">
    <property type="taxonomic scope" value="Bacteria"/>
</dbReference>
<dbReference type="HOGENOM" id="CLU_094234_2_1_9"/>
<dbReference type="OrthoDB" id="9802227at2"/>
<dbReference type="BioCyc" id="SCAR396513:SCA_RS04110-MONOMER"/>
<dbReference type="Proteomes" id="UP000000444">
    <property type="component" value="Chromosome"/>
</dbReference>
<dbReference type="GO" id="GO:0003723">
    <property type="term" value="F:RNA binding"/>
    <property type="evidence" value="ECO:0007669"/>
    <property type="project" value="UniProtKB-UniRule"/>
</dbReference>
<dbReference type="GO" id="GO:0004845">
    <property type="term" value="F:uracil phosphoribosyltransferase activity"/>
    <property type="evidence" value="ECO:0007669"/>
    <property type="project" value="UniProtKB-UniRule"/>
</dbReference>
<dbReference type="GO" id="GO:0006353">
    <property type="term" value="P:DNA-templated transcription termination"/>
    <property type="evidence" value="ECO:0007669"/>
    <property type="project" value="UniProtKB-UniRule"/>
</dbReference>
<dbReference type="CDD" id="cd06223">
    <property type="entry name" value="PRTases_typeI"/>
    <property type="match status" value="1"/>
</dbReference>
<dbReference type="FunFam" id="3.40.50.2020:FF:000020">
    <property type="entry name" value="Bifunctional protein PyrR"/>
    <property type="match status" value="1"/>
</dbReference>
<dbReference type="Gene3D" id="3.40.50.2020">
    <property type="match status" value="1"/>
</dbReference>
<dbReference type="HAMAP" id="MF_01219">
    <property type="entry name" value="PyrR"/>
    <property type="match status" value="1"/>
</dbReference>
<dbReference type="InterPro" id="IPR000836">
    <property type="entry name" value="PRibTrfase_dom"/>
</dbReference>
<dbReference type="InterPro" id="IPR029057">
    <property type="entry name" value="PRTase-like"/>
</dbReference>
<dbReference type="InterPro" id="IPR023050">
    <property type="entry name" value="PyrR"/>
</dbReference>
<dbReference type="InterPro" id="IPR050137">
    <property type="entry name" value="PyrR_bifunctional"/>
</dbReference>
<dbReference type="NCBIfam" id="NF003546">
    <property type="entry name" value="PRK05205.1-2"/>
    <property type="match status" value="1"/>
</dbReference>
<dbReference type="NCBIfam" id="NF003548">
    <property type="entry name" value="PRK05205.1-4"/>
    <property type="match status" value="1"/>
</dbReference>
<dbReference type="NCBIfam" id="NF003549">
    <property type="entry name" value="PRK05205.1-5"/>
    <property type="match status" value="1"/>
</dbReference>
<dbReference type="PANTHER" id="PTHR11608">
    <property type="entry name" value="BIFUNCTIONAL PROTEIN PYRR"/>
    <property type="match status" value="1"/>
</dbReference>
<dbReference type="PANTHER" id="PTHR11608:SF0">
    <property type="entry name" value="BIFUNCTIONAL PROTEIN PYRR"/>
    <property type="match status" value="1"/>
</dbReference>
<dbReference type="Pfam" id="PF00156">
    <property type="entry name" value="Pribosyltran"/>
    <property type="match status" value="1"/>
</dbReference>
<dbReference type="SUPFAM" id="SSF53271">
    <property type="entry name" value="PRTase-like"/>
    <property type="match status" value="1"/>
</dbReference>
<sequence length="175" mass="19610">MSERIVLDEAAMKRTLMRMAHEILEYNRGTKDLVLLGVKTRGEFLAKSIQSKIQQIENTTVPTGTIDITQFRDDLELPTPKISEKSFVIDVDITDKVVIIIDDVLYTGRTVRASLDAILLHSRPQKIGLAALVDRGHRELPIRADFVGKNIPTARDEAVSVYVKETDGRNAVIIE</sequence>
<organism>
    <name type="scientific">Staphylococcus carnosus (strain TM300)</name>
    <dbReference type="NCBI Taxonomy" id="396513"/>
    <lineage>
        <taxon>Bacteria</taxon>
        <taxon>Bacillati</taxon>
        <taxon>Bacillota</taxon>
        <taxon>Bacilli</taxon>
        <taxon>Bacillales</taxon>
        <taxon>Staphylococcaceae</taxon>
        <taxon>Staphylococcus</taxon>
    </lineage>
</organism>
<name>PYRR_STACT</name>
<comment type="function">
    <text evidence="1">Regulates transcriptional attenuation of the pyrimidine nucleotide (pyr) operon by binding in a uridine-dependent manner to specific sites on pyr mRNA. This disrupts an antiterminator hairpin in the RNA and favors formation of a downstream transcription terminator, leading to a reduced expression of downstream genes.</text>
</comment>
<comment type="function">
    <text evidence="1">Also displays a weak uracil phosphoribosyltransferase activity which is not physiologically significant.</text>
</comment>
<comment type="catalytic activity">
    <reaction evidence="1">
        <text>UMP + diphosphate = 5-phospho-alpha-D-ribose 1-diphosphate + uracil</text>
        <dbReference type="Rhea" id="RHEA:13017"/>
        <dbReference type="ChEBI" id="CHEBI:17568"/>
        <dbReference type="ChEBI" id="CHEBI:33019"/>
        <dbReference type="ChEBI" id="CHEBI:57865"/>
        <dbReference type="ChEBI" id="CHEBI:58017"/>
        <dbReference type="EC" id="2.4.2.9"/>
    </reaction>
</comment>
<comment type="subunit">
    <text evidence="1">Homodimer and homohexamer; in equilibrium.</text>
</comment>
<comment type="similarity">
    <text evidence="1">Belongs to the purine/pyrimidine phosphoribosyltransferase family. PyrR subfamily.</text>
</comment>
<keyword id="KW-0328">Glycosyltransferase</keyword>
<keyword id="KW-1185">Reference proteome</keyword>
<keyword id="KW-0694">RNA-binding</keyword>
<keyword id="KW-0804">Transcription</keyword>
<keyword id="KW-0805">Transcription regulation</keyword>
<keyword id="KW-0806">Transcription termination</keyword>
<keyword id="KW-0808">Transferase</keyword>
<feature type="chain" id="PRO_1000164852" description="Bifunctional protein PyrR">
    <location>
        <begin position="1"/>
        <end position="175"/>
    </location>
</feature>
<feature type="short sequence motif" description="PRPP-binding" evidence="1">
    <location>
        <begin position="98"/>
        <end position="110"/>
    </location>
</feature>
<reference key="1">
    <citation type="journal article" date="2009" name="Appl. Environ. Microbiol.">
        <title>Genome analysis of the meat starter culture bacterium Staphylococcus carnosus TM300.</title>
        <authorList>
            <person name="Rosenstein R."/>
            <person name="Nerz C."/>
            <person name="Biswas L."/>
            <person name="Resch A."/>
            <person name="Raddatz G."/>
            <person name="Schuster S.C."/>
            <person name="Goetz F."/>
        </authorList>
    </citation>
    <scope>NUCLEOTIDE SEQUENCE [LARGE SCALE GENOMIC DNA]</scope>
    <source>
        <strain>TM300</strain>
    </source>
</reference>
<accession>B9DPQ3</accession>
<protein>
    <recommendedName>
        <fullName evidence="1">Bifunctional protein PyrR</fullName>
    </recommendedName>
    <domain>
        <recommendedName>
            <fullName evidence="1">Pyrimidine operon regulatory protein</fullName>
        </recommendedName>
    </domain>
    <domain>
        <recommendedName>
            <fullName evidence="1">Uracil phosphoribosyltransferase</fullName>
            <shortName evidence="1">UPRTase</shortName>
            <ecNumber evidence="1">2.4.2.9</ecNumber>
        </recommendedName>
    </domain>
</protein>
<gene>
    <name evidence="1" type="primary">pyrR</name>
    <name type="ordered locus">Sca_0812</name>
</gene>
<evidence type="ECO:0000255" key="1">
    <source>
        <dbReference type="HAMAP-Rule" id="MF_01219"/>
    </source>
</evidence>
<proteinExistence type="inferred from homology"/>